<comment type="function">
    <text>Enables the insect to feed on furanocoumarin-producing plants and evolved as an adaptation for detoxification of xanthotoxin and other furanocoumarins.</text>
</comment>
<comment type="catalytic activity">
    <reaction>
        <text>an organic molecule + reduced [NADPH--hemoprotein reductase] + O2 = an alcohol + oxidized [NADPH--hemoprotein reductase] + H2O + H(+)</text>
        <dbReference type="Rhea" id="RHEA:17149"/>
        <dbReference type="Rhea" id="RHEA-COMP:11964"/>
        <dbReference type="Rhea" id="RHEA-COMP:11965"/>
        <dbReference type="ChEBI" id="CHEBI:15377"/>
        <dbReference type="ChEBI" id="CHEBI:15378"/>
        <dbReference type="ChEBI" id="CHEBI:15379"/>
        <dbReference type="ChEBI" id="CHEBI:30879"/>
        <dbReference type="ChEBI" id="CHEBI:57618"/>
        <dbReference type="ChEBI" id="CHEBI:58210"/>
        <dbReference type="ChEBI" id="CHEBI:142491"/>
        <dbReference type="EC" id="1.14.14.1"/>
    </reaction>
</comment>
<comment type="cofactor">
    <cofactor evidence="1">
        <name>heme</name>
        <dbReference type="ChEBI" id="CHEBI:30413"/>
    </cofactor>
</comment>
<comment type="subcellular location">
    <subcellularLocation>
        <location>Endoplasmic reticulum membrane</location>
        <topology>Peripheral membrane protein</topology>
    </subcellularLocation>
    <subcellularLocation>
        <location>Microsome membrane</location>
        <topology>Peripheral membrane protein</topology>
    </subcellularLocation>
</comment>
<comment type="tissue specificity">
    <text>Midgut microsome.</text>
</comment>
<comment type="induction">
    <text>By xanthotoxin, a secondary metabolite abundant in the host plants of this specialized herbivore.</text>
</comment>
<comment type="polymorphism">
    <text>The sequence shown is that of 6B1-1, 6B1-2 seems to differ in 9 positions and is probably an allele.</text>
</comment>
<comment type="similarity">
    <text evidence="2">Belongs to the cytochrome P450 family.</text>
</comment>
<organism>
    <name type="scientific">Papilio polyxenes</name>
    <name type="common">Black swallowtail butterfly</name>
    <dbReference type="NCBI Taxonomy" id="7146"/>
    <lineage>
        <taxon>Eukaryota</taxon>
        <taxon>Metazoa</taxon>
        <taxon>Ecdysozoa</taxon>
        <taxon>Arthropoda</taxon>
        <taxon>Hexapoda</taxon>
        <taxon>Insecta</taxon>
        <taxon>Pterygota</taxon>
        <taxon>Neoptera</taxon>
        <taxon>Endopterygota</taxon>
        <taxon>Lepidoptera</taxon>
        <taxon>Glossata</taxon>
        <taxon>Ditrysia</taxon>
        <taxon>Papilionoidea</taxon>
        <taxon>Papilionidae</taxon>
        <taxon>Papilioninae</taxon>
        <taxon>Papilio</taxon>
    </lineage>
</organism>
<feature type="chain" id="PRO_0000051893" description="Cytochrome P450 6B1">
    <location>
        <begin position="1"/>
        <end position="498"/>
    </location>
</feature>
<feature type="binding site" description="axial binding residue" evidence="1">
    <location>
        <position position="443"/>
    </location>
    <ligand>
        <name>heme</name>
        <dbReference type="ChEBI" id="CHEBI:30413"/>
    </ligand>
    <ligandPart>
        <name>Fe</name>
        <dbReference type="ChEBI" id="CHEBI:18248"/>
    </ligandPart>
</feature>
<feature type="sequence variant" description="In 6B1-2 and 6B1-3.">
    <original>N</original>
    <variation>D</variation>
    <location>
        <position position="24"/>
    </location>
</feature>
<feature type="sequence variant" description="In 6B1-2 and 6B1-3.">
    <original>NS</original>
    <variation>KC</variation>
    <location>
        <begin position="155"/>
        <end position="156"/>
    </location>
</feature>
<feature type="sequence variant" description="In 6B1-2.">
    <original>K</original>
    <variation>R</variation>
    <location>
        <position position="243"/>
    </location>
</feature>
<feature type="sequence variant" description="In 6B1-2.">
    <original>A</original>
    <variation>S</variation>
    <location>
        <position position="285"/>
    </location>
</feature>
<feature type="sequence variant" description="In 6B1-2.">
    <original>I</original>
    <variation>V</variation>
    <location>
        <position position="293"/>
    </location>
</feature>
<feature type="sequence variant" description="In 6B1-2.">
    <original>M</original>
    <variation>V</variation>
    <location>
        <position position="458"/>
    </location>
</feature>
<feature type="sequence variant" description="In 6B1-2.">
    <original>P</original>
    <variation>E</variation>
    <location>
        <position position="475"/>
    </location>
</feature>
<feature type="sequence variant" description="In 6B1-2.">
    <original>L</original>
    <variation>I</variation>
    <location>
        <position position="495"/>
    </location>
</feature>
<proteinExistence type="evidence at protein level"/>
<accession>Q04552</accession>
<accession>Q04553</accession>
<accession>Q27878</accession>
<name>CP6B1_PAPPO</name>
<dbReference type="EC" id="1.14.14.1"/>
<dbReference type="EMBL" id="M80828">
    <property type="protein sequence ID" value="AAA29789.1"/>
    <property type="molecule type" value="mRNA"/>
</dbReference>
<dbReference type="EMBL" id="M83117">
    <property type="protein sequence ID" value="AAA29790.1"/>
    <property type="molecule type" value="mRNA"/>
</dbReference>
<dbReference type="EMBL" id="Z29624">
    <property type="protein sequence ID" value="CAA82732.1"/>
    <property type="molecule type" value="Genomic_DNA"/>
</dbReference>
<dbReference type="EMBL" id="U05037">
    <property type="protein sequence ID" value="AAA16154.1"/>
    <property type="molecule type" value="Unassigned_DNA"/>
</dbReference>
<dbReference type="PIR" id="S48058">
    <property type="entry name" value="S48058"/>
</dbReference>
<dbReference type="SMR" id="Q04552"/>
<dbReference type="BRENDA" id="1.14.14.1">
    <property type="organism ID" value="7735"/>
</dbReference>
<dbReference type="GO" id="GO:0005789">
    <property type="term" value="C:endoplasmic reticulum membrane"/>
    <property type="evidence" value="ECO:0007669"/>
    <property type="project" value="UniProtKB-SubCell"/>
</dbReference>
<dbReference type="GO" id="GO:0020037">
    <property type="term" value="F:heme binding"/>
    <property type="evidence" value="ECO:0007669"/>
    <property type="project" value="InterPro"/>
</dbReference>
<dbReference type="GO" id="GO:0005506">
    <property type="term" value="F:iron ion binding"/>
    <property type="evidence" value="ECO:0007669"/>
    <property type="project" value="InterPro"/>
</dbReference>
<dbReference type="GO" id="GO:0016712">
    <property type="term" value="F:oxidoreductase activity, acting on paired donors, with incorporation or reduction of molecular oxygen, reduced flavin or flavoprotein as one donor, and incorporation of one atom of oxygen"/>
    <property type="evidence" value="ECO:0007669"/>
    <property type="project" value="UniProtKB-EC"/>
</dbReference>
<dbReference type="CDD" id="cd11056">
    <property type="entry name" value="CYP6-like"/>
    <property type="match status" value="1"/>
</dbReference>
<dbReference type="FunFam" id="1.10.630.10:FF:000042">
    <property type="entry name" value="Cytochrome P450"/>
    <property type="match status" value="1"/>
</dbReference>
<dbReference type="Gene3D" id="1.10.630.10">
    <property type="entry name" value="Cytochrome P450"/>
    <property type="match status" value="1"/>
</dbReference>
<dbReference type="InterPro" id="IPR001128">
    <property type="entry name" value="Cyt_P450"/>
</dbReference>
<dbReference type="InterPro" id="IPR017972">
    <property type="entry name" value="Cyt_P450_CS"/>
</dbReference>
<dbReference type="InterPro" id="IPR002401">
    <property type="entry name" value="Cyt_P450_E_grp-I"/>
</dbReference>
<dbReference type="InterPro" id="IPR036396">
    <property type="entry name" value="Cyt_P450_sf"/>
</dbReference>
<dbReference type="InterPro" id="IPR050476">
    <property type="entry name" value="Insect_CytP450_Detox"/>
</dbReference>
<dbReference type="PANTHER" id="PTHR24292">
    <property type="entry name" value="CYTOCHROME P450"/>
    <property type="match status" value="1"/>
</dbReference>
<dbReference type="PANTHER" id="PTHR24292:SF104">
    <property type="entry name" value="CYTOCHROME P450 308A1-RELATED"/>
    <property type="match status" value="1"/>
</dbReference>
<dbReference type="Pfam" id="PF00067">
    <property type="entry name" value="p450"/>
    <property type="match status" value="1"/>
</dbReference>
<dbReference type="PRINTS" id="PR00463">
    <property type="entry name" value="EP450I"/>
</dbReference>
<dbReference type="PRINTS" id="PR00385">
    <property type="entry name" value="P450"/>
</dbReference>
<dbReference type="SUPFAM" id="SSF48264">
    <property type="entry name" value="Cytochrome P450"/>
    <property type="match status" value="1"/>
</dbReference>
<dbReference type="PROSITE" id="PS00086">
    <property type="entry name" value="CYTOCHROME_P450"/>
    <property type="match status" value="1"/>
</dbReference>
<keyword id="KW-0903">Direct protein sequencing</keyword>
<keyword id="KW-0256">Endoplasmic reticulum</keyword>
<keyword id="KW-0349">Heme</keyword>
<keyword id="KW-0408">Iron</keyword>
<keyword id="KW-0472">Membrane</keyword>
<keyword id="KW-0479">Metal-binding</keyword>
<keyword id="KW-0492">Microsome</keyword>
<keyword id="KW-0503">Monooxygenase</keyword>
<keyword id="KW-0560">Oxidoreductase</keyword>
<gene>
    <name type="primary">CYP6B1</name>
</gene>
<sequence>MLYLLALVTVLAGLLHYYFTRTFNYWKKRNVAGPKPVPFFGNLKDSVLRRKPQVMVYKSIYDEFPNEKVVGIYRMTTPSVLLRDLDIIKHVLIKDFESFADRGVEFSLDGLGANIFHADGDRWRSLRNRFTPLFTSGKLKSMLPLMSQVGDRFINSIDEVSQTQPEQSIHNLVQKFTMTNIAACVFGLNLDEGMLKTLEDLDKHIFTVNYSAELDMMYPGILKKLNGSLFPKVVSKFFDNLTKNVLEMRKGTPSYQKDMIDLIQELREKKTLELSRKHENEDVKALELTDGVISAQMFIFYMAGYETSATTMTYLFYELAKNPDIQDKLIAEIDEVLSRHDGNITYECLSEMTYLSKVFDETLRKYPVADFTQRNAKTDYVFPGTDITIKKGQTIIVSTWGIQNDPKYYPNPEKFDPERFNPENVKDRHPCAYLPFSAGPRNCLGMRFAKWQSEVCIMKVLSKYRVEPSMKSSGPFKFDPMRLFALPKGGIYVNLVRR</sequence>
<protein>
    <recommendedName>
        <fullName>Cytochrome P450 6B1</fullName>
        <ecNumber>1.14.14.1</ecNumber>
    </recommendedName>
    <alternativeName>
        <fullName>CYP6B1v1/CYP6B1v2/CYP6B1v3</fullName>
    </alternativeName>
    <alternativeName>
        <fullName>CYPVIB1</fullName>
    </alternativeName>
</protein>
<reference key="1">
    <citation type="journal article" date="1992" name="Proc. Natl. Acad. Sci. U.S.A.">
        <title>A host-inducible cytochrome P-450 from a host-specific caterpillar: molecular cloning and evolution.</title>
        <authorList>
            <person name="Cohen M.B."/>
            <person name="Schuler M.A."/>
            <person name="Berenbaum M.R."/>
        </authorList>
    </citation>
    <scope>NUCLEOTIDE SEQUENCE [MRNA]</scope>
    <scope>PROTEIN SEQUENCE OF 1-25 AND 401-406</scope>
    <source>
        <tissue>Midgut</tissue>
    </source>
</reference>
<reference key="2">
    <citation type="journal article" date="1994" name="Nucleic Acids Res.">
        <title>Transcriptional regulation of the Papilio polyxenes CYP6B1 gene.</title>
        <authorList>
            <person name="Prapaipong H.H."/>
            <person name="Berenbaum M.M."/>
            <person name="Schuler M.M."/>
        </authorList>
    </citation>
    <scope>NUCLEOTIDE SEQUENCE [GENOMIC DNA] (CYP6B1V3)</scope>
    <source>
        <tissue>Midgut</tissue>
    </source>
</reference>
<evidence type="ECO:0000250" key="1"/>
<evidence type="ECO:0000305" key="2"/>